<accession>B7LD40</accession>
<comment type="subcellular location">
    <subcellularLocation>
        <location evidence="1">Cell membrane</location>
        <topology evidence="1">Multi-pass membrane protein</topology>
    </subcellularLocation>
</comment>
<comment type="similarity">
    <text evidence="1">Belongs to the AAE transporter (TC 2.A.81) family. YbjL subfamily.</text>
</comment>
<keyword id="KW-1003">Cell membrane</keyword>
<keyword id="KW-0472">Membrane</keyword>
<keyword id="KW-1185">Reference proteome</keyword>
<keyword id="KW-0677">Repeat</keyword>
<keyword id="KW-0812">Transmembrane</keyword>
<keyword id="KW-1133">Transmembrane helix</keyword>
<keyword id="KW-0813">Transport</keyword>
<gene>
    <name evidence="1" type="primary">ybjL</name>
    <name type="ordered locus">EC55989_0892</name>
</gene>
<evidence type="ECO:0000255" key="1">
    <source>
        <dbReference type="HAMAP-Rule" id="MF_01015"/>
    </source>
</evidence>
<reference key="1">
    <citation type="journal article" date="2009" name="PLoS Genet.">
        <title>Organised genome dynamics in the Escherichia coli species results in highly diverse adaptive paths.</title>
        <authorList>
            <person name="Touchon M."/>
            <person name="Hoede C."/>
            <person name="Tenaillon O."/>
            <person name="Barbe V."/>
            <person name="Baeriswyl S."/>
            <person name="Bidet P."/>
            <person name="Bingen E."/>
            <person name="Bonacorsi S."/>
            <person name="Bouchier C."/>
            <person name="Bouvet O."/>
            <person name="Calteau A."/>
            <person name="Chiapello H."/>
            <person name="Clermont O."/>
            <person name="Cruveiller S."/>
            <person name="Danchin A."/>
            <person name="Diard M."/>
            <person name="Dossat C."/>
            <person name="Karoui M.E."/>
            <person name="Frapy E."/>
            <person name="Garry L."/>
            <person name="Ghigo J.M."/>
            <person name="Gilles A.M."/>
            <person name="Johnson J."/>
            <person name="Le Bouguenec C."/>
            <person name="Lescat M."/>
            <person name="Mangenot S."/>
            <person name="Martinez-Jehanne V."/>
            <person name="Matic I."/>
            <person name="Nassif X."/>
            <person name="Oztas S."/>
            <person name="Petit M.A."/>
            <person name="Pichon C."/>
            <person name="Rouy Z."/>
            <person name="Ruf C.S."/>
            <person name="Schneider D."/>
            <person name="Tourret J."/>
            <person name="Vacherie B."/>
            <person name="Vallenet D."/>
            <person name="Medigue C."/>
            <person name="Rocha E.P.C."/>
            <person name="Denamur E."/>
        </authorList>
    </citation>
    <scope>NUCLEOTIDE SEQUENCE [LARGE SCALE GENOMIC DNA]</scope>
    <source>
        <strain>55989 / EAEC</strain>
    </source>
</reference>
<dbReference type="EMBL" id="CU928145">
    <property type="protein sequence ID" value="CAU96757.1"/>
    <property type="molecule type" value="Genomic_DNA"/>
</dbReference>
<dbReference type="RefSeq" id="WP_001024876.1">
    <property type="nucleotide sequence ID" value="NZ_CP028304.1"/>
</dbReference>
<dbReference type="SMR" id="B7LD40"/>
<dbReference type="KEGG" id="eck:EC55989_0892"/>
<dbReference type="HOGENOM" id="CLU_035023_2_2_6"/>
<dbReference type="Proteomes" id="UP000000746">
    <property type="component" value="Chromosome"/>
</dbReference>
<dbReference type="GO" id="GO:0005886">
    <property type="term" value="C:plasma membrane"/>
    <property type="evidence" value="ECO:0007669"/>
    <property type="project" value="UniProtKB-SubCell"/>
</dbReference>
<dbReference type="GO" id="GO:0008324">
    <property type="term" value="F:monoatomic cation transmembrane transporter activity"/>
    <property type="evidence" value="ECO:0007669"/>
    <property type="project" value="InterPro"/>
</dbReference>
<dbReference type="GO" id="GO:0006813">
    <property type="term" value="P:potassium ion transport"/>
    <property type="evidence" value="ECO:0007669"/>
    <property type="project" value="InterPro"/>
</dbReference>
<dbReference type="FunFam" id="3.30.70.1450:FF:000003">
    <property type="entry name" value="Putative transport protein YbjL"/>
    <property type="match status" value="1"/>
</dbReference>
<dbReference type="Gene3D" id="3.30.70.1450">
    <property type="entry name" value="Regulator of K+ conductance, C-terminal domain"/>
    <property type="match status" value="2"/>
</dbReference>
<dbReference type="HAMAP" id="MF_01015">
    <property type="entry name" value="YbjL"/>
    <property type="match status" value="1"/>
</dbReference>
<dbReference type="InterPro" id="IPR050144">
    <property type="entry name" value="AAE_transporter"/>
</dbReference>
<dbReference type="InterPro" id="IPR006037">
    <property type="entry name" value="RCK_C"/>
</dbReference>
<dbReference type="InterPro" id="IPR036721">
    <property type="entry name" value="RCK_C_sf"/>
</dbReference>
<dbReference type="InterPro" id="IPR023017">
    <property type="entry name" value="Transp_YbjL_put"/>
</dbReference>
<dbReference type="InterPro" id="IPR006512">
    <property type="entry name" value="YidE_YbjL"/>
</dbReference>
<dbReference type="NCBIfam" id="NF003440">
    <property type="entry name" value="PRK04972.1"/>
    <property type="match status" value="1"/>
</dbReference>
<dbReference type="NCBIfam" id="TIGR01625">
    <property type="entry name" value="YidE_YbjL_dupl"/>
    <property type="match status" value="2"/>
</dbReference>
<dbReference type="PANTHER" id="PTHR30445">
    <property type="entry name" value="K(+)_H(+) ANTIPORTER SUBUNIT KHTT"/>
    <property type="match status" value="1"/>
</dbReference>
<dbReference type="PANTHER" id="PTHR30445:SF10">
    <property type="entry name" value="TRANSPORT PROTEIN YBJL-RELATED"/>
    <property type="match status" value="1"/>
</dbReference>
<dbReference type="Pfam" id="PF06826">
    <property type="entry name" value="Asp-Al_Ex"/>
    <property type="match status" value="2"/>
</dbReference>
<dbReference type="Pfam" id="PF02080">
    <property type="entry name" value="TrkA_C"/>
    <property type="match status" value="2"/>
</dbReference>
<dbReference type="SUPFAM" id="SSF116726">
    <property type="entry name" value="TrkA C-terminal domain-like"/>
    <property type="match status" value="2"/>
</dbReference>
<dbReference type="PROSITE" id="PS51202">
    <property type="entry name" value="RCK_C"/>
    <property type="match status" value="2"/>
</dbReference>
<protein>
    <recommendedName>
        <fullName evidence="1">Putative transport protein YbjL</fullName>
    </recommendedName>
</protein>
<name>YBJL_ECO55</name>
<proteinExistence type="inferred from homology"/>
<feature type="chain" id="PRO_1000148994" description="Putative transport protein YbjL">
    <location>
        <begin position="1"/>
        <end position="561"/>
    </location>
</feature>
<feature type="transmembrane region" description="Helical" evidence="1">
    <location>
        <begin position="8"/>
        <end position="28"/>
    </location>
</feature>
<feature type="transmembrane region" description="Helical" evidence="1">
    <location>
        <begin position="32"/>
        <end position="52"/>
    </location>
</feature>
<feature type="transmembrane region" description="Helical" evidence="1">
    <location>
        <begin position="66"/>
        <end position="86"/>
    </location>
</feature>
<feature type="transmembrane region" description="Helical" evidence="1">
    <location>
        <begin position="94"/>
        <end position="114"/>
    </location>
</feature>
<feature type="transmembrane region" description="Helical" evidence="1">
    <location>
        <begin position="158"/>
        <end position="178"/>
    </location>
</feature>
<feature type="transmembrane region" description="Helical" evidence="1">
    <location>
        <begin position="383"/>
        <end position="403"/>
    </location>
</feature>
<feature type="transmembrane region" description="Helical" evidence="1">
    <location>
        <begin position="406"/>
        <end position="426"/>
    </location>
</feature>
<feature type="transmembrane region" description="Helical" evidence="1">
    <location>
        <begin position="451"/>
        <end position="471"/>
    </location>
</feature>
<feature type="transmembrane region" description="Helical" evidence="1">
    <location>
        <begin position="475"/>
        <end position="495"/>
    </location>
</feature>
<feature type="transmembrane region" description="Helical" evidence="1">
    <location>
        <begin position="540"/>
        <end position="560"/>
    </location>
</feature>
<feature type="domain" description="RCK C-terminal 1" evidence="1">
    <location>
        <begin position="200"/>
        <end position="288"/>
    </location>
</feature>
<feature type="domain" description="RCK C-terminal 2" evidence="1">
    <location>
        <begin position="292"/>
        <end position="373"/>
    </location>
</feature>
<organism>
    <name type="scientific">Escherichia coli (strain 55989 / EAEC)</name>
    <dbReference type="NCBI Taxonomy" id="585055"/>
    <lineage>
        <taxon>Bacteria</taxon>
        <taxon>Pseudomonadati</taxon>
        <taxon>Pseudomonadota</taxon>
        <taxon>Gammaproteobacteria</taxon>
        <taxon>Enterobacterales</taxon>
        <taxon>Enterobacteriaceae</taxon>
        <taxon>Escherichia</taxon>
    </lineage>
</organism>
<sequence>MNINVAELLNGNYILLLFVVLALGLCLGKLRLGSIQLGNSIGVLVVSLLLGQQHFSINTDALNLGFMLFIFCVGVEAGPNFFSIFFRDGKNYLMLALVMVGSALVIALGLGKLFGWDIGLTAGMLAGSMTSTPVLVGAGDTLRHSGMESRQLSLALDNLSLGYALTYLIGLVSLIVGARYLPKLQHQDLQTSAQQIARERGLDTDANRKVYLPVIRAYRVGPELVAWTDGKNLRELGIYRQTGCYIERIRRNGILANPDGDAVLQMGDEIALVGYPDAHARLDPSFRNGKEVFDRDLLDMRIVTEEVVVKNHNAVGKRLAQLKLTDHGCFLNRVIRSQIEMPIDDNVVLNKGDVLQVSGDARRVKTIADRIGFISIHSQVTDLLAFCAFFVIGLMIGMITFQFSTFSFGMGNAAGLLFAGIMLGFMRANHPTFGYIPQGALSMVKEFGLMVFMAGVGLSAGSGINNGLGAIGGQMLIAGLIVSLVPVVICFLFGAYVLRMNRALLFGAMMGARTCAPAMEIISDTARSNIPALGYAGTYAIANVLLTLAGTIIVMVWPGLG</sequence>